<organism>
    <name type="scientific">Mus musculus</name>
    <name type="common">Mouse</name>
    <dbReference type="NCBI Taxonomy" id="10090"/>
    <lineage>
        <taxon>Eukaryota</taxon>
        <taxon>Metazoa</taxon>
        <taxon>Chordata</taxon>
        <taxon>Craniata</taxon>
        <taxon>Vertebrata</taxon>
        <taxon>Euteleostomi</taxon>
        <taxon>Mammalia</taxon>
        <taxon>Eutheria</taxon>
        <taxon>Euarchontoglires</taxon>
        <taxon>Glires</taxon>
        <taxon>Rodentia</taxon>
        <taxon>Myomorpha</taxon>
        <taxon>Muroidea</taxon>
        <taxon>Muridae</taxon>
        <taxon>Murinae</taxon>
        <taxon>Mus</taxon>
        <taxon>Mus</taxon>
    </lineage>
</organism>
<accession>Q640N2</accession>
<accession>G3X9K5</accession>
<reference key="1">
    <citation type="journal article" date="2009" name="PLoS Biol.">
        <title>Lineage-specific biology revealed by a finished genome assembly of the mouse.</title>
        <authorList>
            <person name="Church D.M."/>
            <person name="Goodstadt L."/>
            <person name="Hillier L.W."/>
            <person name="Zody M.C."/>
            <person name="Goldstein S."/>
            <person name="She X."/>
            <person name="Bult C.J."/>
            <person name="Agarwala R."/>
            <person name="Cherry J.L."/>
            <person name="DiCuccio M."/>
            <person name="Hlavina W."/>
            <person name="Kapustin Y."/>
            <person name="Meric P."/>
            <person name="Maglott D."/>
            <person name="Birtle Z."/>
            <person name="Marques A.C."/>
            <person name="Graves T."/>
            <person name="Zhou S."/>
            <person name="Teague B."/>
            <person name="Potamousis K."/>
            <person name="Churas C."/>
            <person name="Place M."/>
            <person name="Herschleb J."/>
            <person name="Runnheim R."/>
            <person name="Forrest D."/>
            <person name="Amos-Landgraf J."/>
            <person name="Schwartz D.C."/>
            <person name="Cheng Z."/>
            <person name="Lindblad-Toh K."/>
            <person name="Eichler E.E."/>
            <person name="Ponting C.P."/>
        </authorList>
    </citation>
    <scope>NUCLEOTIDE SEQUENCE [LARGE SCALE GENOMIC DNA]</scope>
    <source>
        <strain>C57BL/6J</strain>
    </source>
</reference>
<reference key="2">
    <citation type="submission" date="2005-07" db="EMBL/GenBank/DDBJ databases">
        <authorList>
            <person name="Mural R.J."/>
            <person name="Adams M.D."/>
            <person name="Myers E.W."/>
            <person name="Smith H.O."/>
            <person name="Venter J.C."/>
        </authorList>
    </citation>
    <scope>NUCLEOTIDE SEQUENCE [LARGE SCALE GENOMIC DNA]</scope>
</reference>
<reference key="3">
    <citation type="journal article" date="2004" name="Genome Res.">
        <title>The status, quality, and expansion of the NIH full-length cDNA project: the Mammalian Gene Collection (MGC).</title>
        <authorList>
            <consortium name="The MGC Project Team"/>
        </authorList>
    </citation>
    <scope>NUCLEOTIDE SEQUENCE [LARGE SCALE MRNA]</scope>
    <source>
        <strain>C57BL/6J</strain>
        <tissue>Eye</tissue>
    </source>
</reference>
<reference key="4">
    <citation type="journal article" date="2007" name="Dev. Cell">
        <title>The graded response to Sonic Hedgehog depends on cilia architecture.</title>
        <authorList>
            <person name="Caspary T."/>
            <person name="Larkins C.E."/>
            <person name="Anderson K.V."/>
        </authorList>
    </citation>
    <scope>FUNCTION</scope>
    <scope>SUBCELLULAR LOCATION</scope>
    <scope>DISRUPTION PHENOTYPE</scope>
</reference>
<reference key="5">
    <citation type="journal article" date="2009" name="Immunity">
        <title>The phagosomal proteome in interferon-gamma-activated macrophages.</title>
        <authorList>
            <person name="Trost M."/>
            <person name="English L."/>
            <person name="Lemieux S."/>
            <person name="Courcelles M."/>
            <person name="Desjardins M."/>
            <person name="Thibault P."/>
        </authorList>
    </citation>
    <scope>PHOSPHORYLATION [LARGE SCALE ANALYSIS] AT SER-328</scope>
    <scope>IDENTIFICATION BY MASS SPECTROMETRY [LARGE SCALE ANALYSIS]</scope>
</reference>
<reference key="6">
    <citation type="journal article" date="2010" name="Cell">
        <title>A tissue-specific atlas of mouse protein phosphorylation and expression.</title>
        <authorList>
            <person name="Huttlin E.L."/>
            <person name="Jedrychowski M.P."/>
            <person name="Elias J.E."/>
            <person name="Goswami T."/>
            <person name="Rad R."/>
            <person name="Beausoleil S.A."/>
            <person name="Villen J."/>
            <person name="Haas W."/>
            <person name="Sowa M.E."/>
            <person name="Gygi S.P."/>
        </authorList>
    </citation>
    <scope>PHOSPHORYLATION [LARGE SCALE ANALYSIS] AT SER-328</scope>
    <scope>IDENTIFICATION BY MASS SPECTROMETRY [LARGE SCALE ANALYSIS]</scope>
    <source>
        <tissue>Brain</tissue>
        <tissue>Kidney</tissue>
        <tissue>Lung</tissue>
    </source>
</reference>
<reference key="7">
    <citation type="journal article" date="2010" name="Dev. Cell">
        <title>Pitchfork regulates primary cilia disassembly and left-right asymmetry.</title>
        <authorList>
            <person name="Kinzel D."/>
            <person name="Boldt K."/>
            <person name="Davis E.E."/>
            <person name="Burtscher I."/>
            <person name="Trumbach D."/>
            <person name="Diplas B."/>
            <person name="Attie-Bitach T."/>
            <person name="Wurst W."/>
            <person name="Katsanis N."/>
            <person name="Ueffing M."/>
            <person name="Lickert H."/>
        </authorList>
    </citation>
    <scope>INTERACTION WITH CIMAP3</scope>
</reference>
<reference key="8">
    <citation type="journal article" date="2010" name="J. Cell Biol.">
        <title>Joubert syndrome Arl13b functions at ciliary membranes and stabilizes protein transport in Caenorhabditis elegans.</title>
        <authorList>
            <person name="Cevik S."/>
            <person name="Hori Y."/>
            <person name="Kaplan O.I."/>
            <person name="Kida K."/>
            <person name="Toivenon T."/>
            <person name="Foley-Fisher C."/>
            <person name="Cottell D."/>
            <person name="Katada T."/>
            <person name="Kontani K."/>
            <person name="Blacque O.E."/>
        </authorList>
    </citation>
    <scope>SUBCELLULAR LOCATION</scope>
    <scope>PALMITOYLATION AT CYS-8 AND CYS-9</scope>
    <scope>MUTAGENESIS OF 8-CYS-CYS-9</scope>
</reference>
<reference key="9">
    <citation type="journal article" date="2011" name="Dev. Biol.">
        <title>Disrupted dorsal neural tube BMP signaling in the cilia mutant Arl13b hnn stems from abnormal Shh signaling.</title>
        <authorList>
            <person name="Horner V.L."/>
            <person name="Caspary T."/>
        </authorList>
    </citation>
    <scope>FUNCTION</scope>
    <scope>DISRUPTION PHENOTYPE</scope>
</reference>
<reference key="10">
    <citation type="journal article" date="2011" name="Mol. Biol. Cell">
        <title>Arl13b regulates ciliogenesis and the dynamic localization of Shh signaling proteins.</title>
        <authorList>
            <person name="Larkins C.E."/>
            <person name="Aviles G.D."/>
            <person name="East M.P."/>
            <person name="Kahn R.A."/>
            <person name="Caspary T."/>
        </authorList>
    </citation>
    <scope>FUNCTION</scope>
    <scope>SUBCELLULAR LOCATION</scope>
    <scope>DISRUPTION PHENOTYPE</scope>
</reference>
<reference key="11">
    <citation type="journal article" date="2012" name="Dev. Biol.">
        <title>Defective Nodal and Cerl2 expression in the Arl13b(hnn) mutant node underlie its heterotaxia.</title>
        <authorList>
            <person name="Larkins C.E."/>
            <person name="Long A.B."/>
            <person name="Caspary T."/>
        </authorList>
    </citation>
    <scope>FUNCTION</scope>
    <scope>DISRUPTION PHENOTYPE</scope>
</reference>
<reference key="12">
    <citation type="journal article" date="2012" name="Dev. Cell">
        <title>Arl13b in primary cilia regulates the migration and placement of interneurons in the developing cerebral cortex.</title>
        <authorList>
            <person name="Higginbotham H."/>
            <person name="Eom T.Y."/>
            <person name="Mariani L.E."/>
            <person name="Bachleda A."/>
            <person name="Hirt J."/>
            <person name="Gukassyan V."/>
            <person name="Cusack C.L."/>
            <person name="Lai C."/>
            <person name="Caspary T."/>
            <person name="Anton E.S."/>
        </authorList>
    </citation>
    <scope>FUNCTION</scope>
    <scope>SUBCELLULAR LOCATION</scope>
    <scope>DISRUPTION PHENOTYPE</scope>
    <scope>TISSUE SPECIFICITY</scope>
    <scope>MUTAGENESIS OF VAL-358</scope>
</reference>
<reference key="13">
    <citation type="journal article" date="2012" name="Development">
        <title>Temporal deletion of Arl13b reveals that a mispatterned neural tube corrects cell fate over time.</title>
        <authorList>
            <person name="Su C.Y."/>
            <person name="Bay S.N."/>
            <person name="Mariani L.E."/>
            <person name="Hillman M.J."/>
            <person name="Caspary T."/>
        </authorList>
    </citation>
    <scope>FUNCTION</scope>
    <scope>DISRUPTION PHENOTYPE</scope>
</reference>
<reference key="14">
    <citation type="journal article" date="2013" name="Cell">
        <title>Asymmetric inheritance of centrosome-associated primary cilium membrane directs ciliogenesis after cell division.</title>
        <authorList>
            <person name="Paridaen J.T."/>
            <person name="Wilsch-Brauninger M."/>
            <person name="Huttner W.B."/>
        </authorList>
    </citation>
    <scope>SUBCELLULAR LOCATION</scope>
</reference>
<reference key="15">
    <citation type="journal article" date="2013" name="Nat. Neurosci.">
        <title>Arl13b-regulated cilia activities are essential for polarized radial glial scaffold formation.</title>
        <authorList>
            <person name="Higginbotham H."/>
            <person name="Guo J."/>
            <person name="Yokota Y."/>
            <person name="Umberger N.L."/>
            <person name="Su C.Y."/>
            <person name="Li J."/>
            <person name="Verma N."/>
            <person name="Hirt J."/>
            <person name="Ghukasyan V."/>
            <person name="Caspary T."/>
            <person name="Anton E.S."/>
        </authorList>
    </citation>
    <scope>FUNCTION</scope>
    <scope>SUBCELLULAR LOCATION</scope>
    <scope>DISRUPTION PHENOTYPE</scope>
    <scope>TISSUE SPECIFICITY</scope>
</reference>
<reference key="16">
    <citation type="journal article" date="2013" name="PLoS Genet.">
        <title>Active transport and diffusion barriers restrict Joubert syndrome-associated ARL13B/ARL-13 to an inv-like ciliary membrane subdomain.</title>
        <authorList>
            <person name="Cevik S."/>
            <person name="Sanders A.A."/>
            <person name="Van Wijk E."/>
            <person name="Boldt K."/>
            <person name="Clarke L."/>
            <person name="van Reeuwijk J."/>
            <person name="Hori Y."/>
            <person name="Horn N."/>
            <person name="Hetterschijt L."/>
            <person name="Wdowicz A."/>
            <person name="Mullins A."/>
            <person name="Kida K."/>
            <person name="Kaplan O.I."/>
            <person name="van Beersum S.E."/>
            <person name="Man Wu K."/>
            <person name="Letteboer S.J."/>
            <person name="Mans D.A."/>
            <person name="Katada T."/>
            <person name="Kontani K."/>
            <person name="Ueffing M."/>
            <person name="Roepman R."/>
            <person name="Kremer H."/>
            <person name="Blacque O.E."/>
        </authorList>
    </citation>
    <scope>SUBCELLULAR LOCATION</scope>
</reference>
<reference key="17">
    <citation type="journal article" date="2015" name="Eur. J. Hum. Genet.">
        <title>Identification of a novel ARL13B variant in a Joubert syndrome-affected patient with retinal impairment and obesity.</title>
        <authorList>
            <person name="Thomas S."/>
            <person name="Cantagrel V."/>
            <person name="Mariani L."/>
            <person name="Serre V."/>
            <person name="Lee J.E."/>
            <person name="Elkhartoufi N."/>
            <person name="de Lonlay P."/>
            <person name="Desguerre I."/>
            <person name="Munnich A."/>
            <person name="Boddaert N."/>
            <person name="Lyonnet S."/>
            <person name="Vekemans M."/>
            <person name="Lisgo S.N."/>
            <person name="Caspary T."/>
            <person name="Gleeson J."/>
            <person name="Attie-Bitach T."/>
        </authorList>
    </citation>
    <scope>SUBCELLULAR LOCATION</scope>
</reference>
<reference key="18">
    <citation type="journal article" date="2016" name="Mol. Biol. Cell">
        <title>Arl13b and the exocyst interact synergistically in ciliogenesis.</title>
        <authorList>
            <person name="Seixas C."/>
            <person name="Choi S.Y."/>
            <person name="Polgar N."/>
            <person name="Umberger N.L."/>
            <person name="East M.P."/>
            <person name="Zuo X."/>
            <person name="Moreiras H."/>
            <person name="Ghossoub R."/>
            <person name="Benmerah A."/>
            <person name="Kahn R.A."/>
            <person name="Fogelgren B."/>
            <person name="Caspary T."/>
            <person name="Lipschutz J.H."/>
            <person name="Barral D.C."/>
        </authorList>
    </citation>
    <scope>SUBCELLULAR LOCATION</scope>
    <scope>INTERACTION WITH EXOC2</scope>
</reference>
<keyword id="KW-1003">Cell membrane</keyword>
<keyword id="KW-0966">Cell projection</keyword>
<keyword id="KW-0969">Cilium</keyword>
<keyword id="KW-0175">Coiled coil</keyword>
<keyword id="KW-0217">Developmental protein</keyword>
<keyword id="KW-0342">GTP-binding</keyword>
<keyword id="KW-0449">Lipoprotein</keyword>
<keyword id="KW-0472">Membrane</keyword>
<keyword id="KW-0547">Nucleotide-binding</keyword>
<keyword id="KW-0564">Palmitate</keyword>
<keyword id="KW-0597">Phosphoprotein</keyword>
<keyword id="KW-1185">Reference proteome</keyword>
<keyword id="KW-0832">Ubl conjugation</keyword>
<name>AR13B_MOUSE</name>
<sequence length="427" mass="48144">MFSLMANCCNLFKRWREPVRKVTLVMVGLDNAGKTATAKGIQGEHPEDVAPTVGFSKIDLRQGKFQVTIFDLGGGKRIRGIWKNYYAESYGVIFVVDSSDEERMEETKETMSEVLRHPRISGKPILVLANKQDKEGALGEADVIECLSLEKLVNEHKCLCQIEPCSAVLGYGKKIDKSIKKGLYWLLHIIAKDFDALSERIQKDTTEQRALEEQEKRERAERVRKLREEREREQTELDGTSGLAEIDSGPVLANPFQPIAAVIIENEKKQEKEKKKQTVEKDSDVGLLEHKVEPEQAAPQSEADCCLQNPDERVVDSYREALSQQLDSEDEQDQRGSESGENSKKKTKKLRMKRSHRVEPVNTDESTPKSPTPPQPPPPVGWGTPKVTRLPKLEPLGETRHNDFYGKPLPPLAVRQRPNGDAQDTIS</sequence>
<proteinExistence type="evidence at protein level"/>
<dbReference type="EMBL" id="AC154309">
    <property type="status" value="NOT_ANNOTATED_CDS"/>
    <property type="molecule type" value="Genomic_DNA"/>
</dbReference>
<dbReference type="EMBL" id="CH466521">
    <property type="protein sequence ID" value="EDK98235.1"/>
    <property type="molecule type" value="Genomic_DNA"/>
</dbReference>
<dbReference type="EMBL" id="BC082574">
    <property type="protein sequence ID" value="AAH82574.1"/>
    <property type="molecule type" value="mRNA"/>
</dbReference>
<dbReference type="CCDS" id="CCDS28261.1"/>
<dbReference type="RefSeq" id="NP_080853.3">
    <property type="nucleotide sequence ID" value="NM_026577.4"/>
</dbReference>
<dbReference type="SMR" id="Q640N2"/>
<dbReference type="BioGRID" id="212681">
    <property type="interactions" value="1"/>
</dbReference>
<dbReference type="FunCoup" id="Q640N2">
    <property type="interactions" value="1459"/>
</dbReference>
<dbReference type="STRING" id="10090.ENSMUSP00000086703"/>
<dbReference type="GlyGen" id="Q640N2">
    <property type="glycosylation" value="3 sites, 1 O-linked glycan (1 site)"/>
</dbReference>
<dbReference type="iPTMnet" id="Q640N2"/>
<dbReference type="PhosphoSitePlus" id="Q640N2"/>
<dbReference type="SwissPalm" id="Q640N2"/>
<dbReference type="jPOST" id="Q640N2"/>
<dbReference type="PaxDb" id="10090-ENSMUSP00000086703"/>
<dbReference type="PeptideAtlas" id="Q640N2"/>
<dbReference type="ProteomicsDB" id="277270"/>
<dbReference type="ABCD" id="Q640N2">
    <property type="antibodies" value="1 sequenced antibody"/>
</dbReference>
<dbReference type="Antibodypedia" id="32073">
    <property type="antibodies" value="148 antibodies from 30 providers"/>
</dbReference>
<dbReference type="DNASU" id="68146"/>
<dbReference type="Ensembl" id="ENSMUST00000089289.6">
    <property type="protein sequence ID" value="ENSMUSP00000086703.6"/>
    <property type="gene ID" value="ENSMUSG00000022911.12"/>
</dbReference>
<dbReference type="GeneID" id="68146"/>
<dbReference type="KEGG" id="mmu:68146"/>
<dbReference type="UCSC" id="uc007zpu.2">
    <property type="organism name" value="mouse"/>
</dbReference>
<dbReference type="AGR" id="MGI:1915396"/>
<dbReference type="CTD" id="200894"/>
<dbReference type="MGI" id="MGI:1915396">
    <property type="gene designation" value="Arl13b"/>
</dbReference>
<dbReference type="VEuPathDB" id="HostDB:ENSMUSG00000022911"/>
<dbReference type="eggNOG" id="KOG0074">
    <property type="taxonomic scope" value="Eukaryota"/>
</dbReference>
<dbReference type="eggNOG" id="KOG0076">
    <property type="taxonomic scope" value="Eukaryota"/>
</dbReference>
<dbReference type="GeneTree" id="ENSGT00940000156365"/>
<dbReference type="HOGENOM" id="CLU_040729_3_0_1"/>
<dbReference type="InParanoid" id="Q640N2"/>
<dbReference type="OMA" id="QKMEHEQ"/>
<dbReference type="OrthoDB" id="14717at2759"/>
<dbReference type="PhylomeDB" id="Q640N2"/>
<dbReference type="TreeFam" id="TF105476"/>
<dbReference type="Reactome" id="R-MMU-5624958">
    <property type="pathway name" value="ARL13B-mediated ciliary trafficking of INPP5E"/>
</dbReference>
<dbReference type="Reactome" id="R-MMU-9013406">
    <property type="pathway name" value="RHOQ GTPase cycle"/>
</dbReference>
<dbReference type="Reactome" id="R-MMU-9646399">
    <property type="pathway name" value="Aggrephagy"/>
</dbReference>
<dbReference type="BioGRID-ORCS" id="68146">
    <property type="hits" value="4 hits in 78 CRISPR screens"/>
</dbReference>
<dbReference type="ChiTaRS" id="Arl13b">
    <property type="organism name" value="mouse"/>
</dbReference>
<dbReference type="PRO" id="PR:Q640N2"/>
<dbReference type="Proteomes" id="UP000000589">
    <property type="component" value="Chromosome 16"/>
</dbReference>
<dbReference type="RNAct" id="Q640N2">
    <property type="molecule type" value="protein"/>
</dbReference>
<dbReference type="Bgee" id="ENSMUSG00000022911">
    <property type="expression patterns" value="Expressed in spermatid and 220 other cell types or tissues"/>
</dbReference>
<dbReference type="ExpressionAtlas" id="Q640N2">
    <property type="expression patterns" value="baseline and differential"/>
</dbReference>
<dbReference type="GO" id="GO:0005930">
    <property type="term" value="C:axoneme"/>
    <property type="evidence" value="ECO:0000314"/>
    <property type="project" value="CACAO"/>
</dbReference>
<dbReference type="GO" id="GO:0036064">
    <property type="term" value="C:ciliary basal body"/>
    <property type="evidence" value="ECO:0007669"/>
    <property type="project" value="Ensembl"/>
</dbReference>
<dbReference type="GO" id="GO:0060170">
    <property type="term" value="C:ciliary membrane"/>
    <property type="evidence" value="ECO:0000314"/>
    <property type="project" value="UniProtKB"/>
</dbReference>
<dbReference type="GO" id="GO:0005929">
    <property type="term" value="C:cilium"/>
    <property type="evidence" value="ECO:0000314"/>
    <property type="project" value="UniProtKB"/>
</dbReference>
<dbReference type="GO" id="GO:0005829">
    <property type="term" value="C:cytosol"/>
    <property type="evidence" value="ECO:0000304"/>
    <property type="project" value="Reactome"/>
</dbReference>
<dbReference type="GO" id="GO:0045171">
    <property type="term" value="C:intercellular bridge"/>
    <property type="evidence" value="ECO:0007669"/>
    <property type="project" value="Ensembl"/>
</dbReference>
<dbReference type="GO" id="GO:0031514">
    <property type="term" value="C:motile cilium"/>
    <property type="evidence" value="ECO:0000314"/>
    <property type="project" value="MGI"/>
</dbReference>
<dbReference type="GO" id="GO:0005525">
    <property type="term" value="F:GTP binding"/>
    <property type="evidence" value="ECO:0007669"/>
    <property type="project" value="UniProtKB-KW"/>
</dbReference>
<dbReference type="GO" id="GO:0003924">
    <property type="term" value="F:GTPase activity"/>
    <property type="evidence" value="ECO:0007669"/>
    <property type="project" value="InterPro"/>
</dbReference>
<dbReference type="GO" id="GO:0060271">
    <property type="term" value="P:cilium assembly"/>
    <property type="evidence" value="ECO:0000315"/>
    <property type="project" value="UniProtKB"/>
</dbReference>
<dbReference type="GO" id="GO:0007368">
    <property type="term" value="P:determination of left/right symmetry"/>
    <property type="evidence" value="ECO:0000315"/>
    <property type="project" value="MGI"/>
</dbReference>
<dbReference type="GO" id="GO:0009953">
    <property type="term" value="P:dorsal/ventral pattern formation"/>
    <property type="evidence" value="ECO:0000315"/>
    <property type="project" value="MGI"/>
</dbReference>
<dbReference type="GO" id="GO:0021943">
    <property type="term" value="P:formation of radial glial scaffolds"/>
    <property type="evidence" value="ECO:0000315"/>
    <property type="project" value="UniProtKB"/>
</dbReference>
<dbReference type="GO" id="GO:0001947">
    <property type="term" value="P:heart looping"/>
    <property type="evidence" value="ECO:0000315"/>
    <property type="project" value="MGI"/>
</dbReference>
<dbReference type="GO" id="GO:0021830">
    <property type="term" value="P:interneuron migration from the subpallium to the cortex"/>
    <property type="evidence" value="ECO:0000315"/>
    <property type="project" value="UniProtKB"/>
</dbReference>
<dbReference type="GO" id="GO:0070986">
    <property type="term" value="P:left/right axis specification"/>
    <property type="evidence" value="ECO:0000315"/>
    <property type="project" value="MGI"/>
</dbReference>
<dbReference type="GO" id="GO:0021532">
    <property type="term" value="P:neural tube patterning"/>
    <property type="evidence" value="ECO:0000315"/>
    <property type="project" value="UniProtKB"/>
</dbReference>
<dbReference type="GO" id="GO:1905515">
    <property type="term" value="P:non-motile cilium assembly"/>
    <property type="evidence" value="ECO:0000315"/>
    <property type="project" value="UniProtKB"/>
</dbReference>
<dbReference type="GO" id="GO:0007224">
    <property type="term" value="P:smoothened signaling pathway"/>
    <property type="evidence" value="ECO:0000315"/>
    <property type="project" value="UniProtKB"/>
</dbReference>
<dbReference type="CDD" id="cd04161">
    <property type="entry name" value="Arl2l1_Arl13_like"/>
    <property type="match status" value="1"/>
</dbReference>
<dbReference type="FunFam" id="3.40.50.300:FF:000415">
    <property type="entry name" value="ADP-ribosylation factor-like GTPase 13B"/>
    <property type="match status" value="1"/>
</dbReference>
<dbReference type="Gene3D" id="3.40.50.300">
    <property type="entry name" value="P-loop containing nucleotide triphosphate hydrolases"/>
    <property type="match status" value="1"/>
</dbReference>
<dbReference type="InterPro" id="IPR051995">
    <property type="entry name" value="Ciliary_GTPase"/>
</dbReference>
<dbReference type="InterPro" id="IPR027417">
    <property type="entry name" value="P-loop_NTPase"/>
</dbReference>
<dbReference type="InterPro" id="IPR005225">
    <property type="entry name" value="Small_GTP-bd"/>
</dbReference>
<dbReference type="InterPro" id="IPR006689">
    <property type="entry name" value="Small_GTPase_ARF/SAR"/>
</dbReference>
<dbReference type="NCBIfam" id="TIGR00231">
    <property type="entry name" value="small_GTP"/>
    <property type="match status" value="1"/>
</dbReference>
<dbReference type="PANTHER" id="PTHR46090">
    <property type="entry name" value="ADP-RIBOSYLATION FACTOR-LIKE PROTEIN 13B"/>
    <property type="match status" value="1"/>
</dbReference>
<dbReference type="PANTHER" id="PTHR46090:SF3">
    <property type="entry name" value="ADP-RIBOSYLATION FACTOR-LIKE PROTEIN 13B"/>
    <property type="match status" value="1"/>
</dbReference>
<dbReference type="Pfam" id="PF00025">
    <property type="entry name" value="Arf"/>
    <property type="match status" value="1"/>
</dbReference>
<dbReference type="PRINTS" id="PR00328">
    <property type="entry name" value="SAR1GTPBP"/>
</dbReference>
<dbReference type="SMART" id="SM00177">
    <property type="entry name" value="ARF"/>
    <property type="match status" value="1"/>
</dbReference>
<dbReference type="SMART" id="SM00178">
    <property type="entry name" value="SAR"/>
    <property type="match status" value="1"/>
</dbReference>
<dbReference type="SUPFAM" id="SSF52540">
    <property type="entry name" value="P-loop containing nucleoside triphosphate hydrolases"/>
    <property type="match status" value="1"/>
</dbReference>
<dbReference type="PROSITE" id="PS51417">
    <property type="entry name" value="ARF"/>
    <property type="match status" value="1"/>
</dbReference>
<feature type="chain" id="PRO_0000251138" description="ADP-ribosylation factor-like protein 13B">
    <location>
        <begin position="1"/>
        <end position="427"/>
    </location>
</feature>
<feature type="region of interest" description="Disordered" evidence="4">
    <location>
        <begin position="207"/>
        <end position="250"/>
    </location>
</feature>
<feature type="region of interest" description="Disordered" evidence="4">
    <location>
        <begin position="269"/>
        <end position="427"/>
    </location>
</feature>
<feature type="coiled-coil region" evidence="3">
    <location>
        <begin position="194"/>
        <end position="285"/>
    </location>
</feature>
<feature type="compositionally biased region" description="Basic and acidic residues" evidence="4">
    <location>
        <begin position="207"/>
        <end position="235"/>
    </location>
</feature>
<feature type="compositionally biased region" description="Basic and acidic residues" evidence="4">
    <location>
        <begin position="269"/>
        <end position="294"/>
    </location>
</feature>
<feature type="compositionally biased region" description="Basic and acidic residues" evidence="4">
    <location>
        <begin position="310"/>
        <end position="319"/>
    </location>
</feature>
<feature type="compositionally biased region" description="Basic and acidic residues" evidence="4">
    <location>
        <begin position="333"/>
        <end position="344"/>
    </location>
</feature>
<feature type="compositionally biased region" description="Basic residues" evidence="4">
    <location>
        <begin position="345"/>
        <end position="356"/>
    </location>
</feature>
<feature type="compositionally biased region" description="Pro residues" evidence="4">
    <location>
        <begin position="370"/>
        <end position="380"/>
    </location>
</feature>
<feature type="compositionally biased region" description="Basic and acidic residues" evidence="4">
    <location>
        <begin position="391"/>
        <end position="404"/>
    </location>
</feature>
<feature type="binding site" evidence="1">
    <location>
        <begin position="28"/>
        <end position="35"/>
    </location>
    <ligand>
        <name>GTP</name>
        <dbReference type="ChEBI" id="CHEBI:37565"/>
    </ligand>
</feature>
<feature type="binding site" evidence="1">
    <location>
        <begin position="71"/>
        <end position="75"/>
    </location>
    <ligand>
        <name>GTP</name>
        <dbReference type="ChEBI" id="CHEBI:37565"/>
    </ligand>
</feature>
<feature type="binding site" evidence="1">
    <location>
        <begin position="130"/>
        <end position="133"/>
    </location>
    <ligand>
        <name>GTP</name>
        <dbReference type="ChEBI" id="CHEBI:37565"/>
    </ligand>
</feature>
<feature type="modified residue" description="Phosphoserine" evidence="21 22">
    <location>
        <position position="328"/>
    </location>
</feature>
<feature type="lipid moiety-binding region" description="S-palmitoyl cysteine" evidence="19">
    <location>
        <position position="8"/>
    </location>
</feature>
<feature type="lipid moiety-binding region" description="S-palmitoyl cysteine" evidence="19">
    <location>
        <position position="9"/>
    </location>
</feature>
<feature type="mutagenesis site" description="Abolishes palmitoylation and localization to the cilium membrane." evidence="6">
    <original>CC</original>
    <variation>SS</variation>
    <location>
        <begin position="8"/>
        <end position="9"/>
    </location>
</feature>
<feature type="mutagenesis site" description="Abolishes localization to cilium." evidence="12">
    <original>V</original>
    <variation>A</variation>
    <location>
        <position position="358"/>
    </location>
</feature>
<feature type="sequence conflict" description="In Ref. 3; AAH82574." evidence="18" ref="3">
    <original>H</original>
    <variation>Q</variation>
    <location>
        <position position="356"/>
    </location>
</feature>
<protein>
    <recommendedName>
        <fullName>ADP-ribosylation factor-like protein 13B</fullName>
    </recommendedName>
    <alternativeName>
        <fullName>ADP-ribosylation factor-like protein 2-like 1</fullName>
        <shortName>ARL2-like protein 1</shortName>
    </alternativeName>
    <alternativeName>
        <fullName>Protein hennin</fullName>
    </alternativeName>
</protein>
<gene>
    <name type="primary">Arl13b</name>
    <name type="synonym">Arl2l1</name>
</gene>
<comment type="function">
    <text evidence="2 5 8 9 10 11 12 13">Cilium-specific protein required to control the microtubule-based, ciliary axoneme structure. May act by maintaining the association between IFT subcomplexes A and B. Binds GTP but is not able to hydrolyze it; the GTPase activity remains unclear. Required to pattern the neural tube. Involved in cerebral cortex development: required for the initial formation of a polarized radial glial scaffold, the first step in the construction of the cerebral cortex, by regulating ciliary signaling (PubMed:23817546). Regulates the migration and placement of postmitotic interneurons in the developing cerebral cortex (PubMed:23153492). Plays a role in ciliar trafficking of phosphatidylinositol phosphatase INPP5E in ciliogenesis (By similarity). May regulate ARF6- and RAB22A-dependent endocytic recycling traffic (By similarity).</text>
</comment>
<comment type="subunit">
    <text evidence="2 7 17">Monomer. Interacts with IFT complex B components IFT46 and IFT74 (By similarity). Interacts with CIMAP3 (By similarity) (PubMed:20643351). Interacts with EXOC2; regulates ARL13B localization to the cilium membrane (PubMed:26582389). Interacts with actin; the interaction mediates colocalization of ARL13B and microtubules (By similarity).</text>
</comment>
<comment type="subcellular location">
    <subcellularLocation>
        <location evidence="5 6 9 12 13 14 15 17">Cell projection</location>
        <location evidence="5 6 9 12 13 14 15 17">Cilium membrane</location>
        <topology evidence="5 6 9 12 13 14 15">Lipid-anchor</topology>
    </subcellularLocation>
    <subcellularLocation>
        <location evidence="16">Cell projection</location>
        <location evidence="16">Cilium</location>
    </subcellularLocation>
    <text>Associates with the cilium membrane via palmitoylation. Localizes to proximal ciliary membranes, to an inversin-like subciliary membrane compartment, excluding the transition zone.</text>
</comment>
<comment type="tissue specificity">
    <text evidence="12 13">Cilium-specific protein. Expressed in neuroepithelial cells and developing radial glia of the developing cerebral cortex: present in both neuroepithelial and radial progenitor cells. In radial progenitors, found in the apical, cell soma domains of these cells (at protein level). Expressed in the primary cilia of postmitotic cortical neurons during embryonic and postnatal development.</text>
</comment>
<comment type="domain">
    <text evidence="2">The C-terminal domain is required for localization to microtubules and the cell membrane.</text>
</comment>
<comment type="PTM">
    <text evidence="1">Sumoylation is required for PKD2 entry into cilium.</text>
</comment>
<comment type="disruption phenotype">
    <text evidence="5 8 9 10 11 12 13">Impaired cilium's ability to convey critical extracellular signals such as Shh, without destroying cilia and their downstream pathways. Mice show a constitutive low-level of Shh activity owing to loss of modulation of Gli2 activator, corresponding to the specification of progenitors of motoneurons through most of the neural tube. In contrast to other mouse mutants that disrupt cilia, Gli3 repressor activity is unaffected in mutants (PubMed:17488627). Mutants show abnormal cilia in which components of Shh signaling are not regulated properly: Ptch1 and Smo localize to cilia regardless of Shh stimulation, and there is no Gli enrichment in cilia upon Shh stimulation (PubMed:21976698). Conditional deletion disrupts interneuronal placement, but not postmigratory differentiation in the developing cerebral cortex (PubMed:23153492). Early neuroepithelial-specific deletion in cortical progenitors induces a reversal of the apical-basal polarity of radial progenitors and aberrant neuronal placement (PubMed:23817546).</text>
</comment>
<comment type="miscellaneous">
    <text evidence="20">Used as a ciliary marker because of its specific localization to microtubule doublets of the ciliary axoneme. Frequently used to study cilium signaling, since in contrast to most cilia null mutants, deletion of Arl13b impairs without destroying cilia and their downstream pathways (PubMed:23817546).</text>
</comment>
<comment type="similarity">
    <text evidence="18">Belongs to the small GTPase superfamily. Arf family.</text>
</comment>
<evidence type="ECO:0000250" key="1"/>
<evidence type="ECO:0000250" key="2">
    <source>
        <dbReference type="UniProtKB" id="Q3SXY8"/>
    </source>
</evidence>
<evidence type="ECO:0000255" key="3"/>
<evidence type="ECO:0000256" key="4">
    <source>
        <dbReference type="SAM" id="MobiDB-lite"/>
    </source>
</evidence>
<evidence type="ECO:0000269" key="5">
    <source>
    </source>
</evidence>
<evidence type="ECO:0000269" key="6">
    <source>
    </source>
</evidence>
<evidence type="ECO:0000269" key="7">
    <source>
    </source>
</evidence>
<evidence type="ECO:0000269" key="8">
    <source>
    </source>
</evidence>
<evidence type="ECO:0000269" key="9">
    <source>
    </source>
</evidence>
<evidence type="ECO:0000269" key="10">
    <source>
    </source>
</evidence>
<evidence type="ECO:0000269" key="11">
    <source>
    </source>
</evidence>
<evidence type="ECO:0000269" key="12">
    <source>
    </source>
</evidence>
<evidence type="ECO:0000269" key="13">
    <source>
    </source>
</evidence>
<evidence type="ECO:0000269" key="14">
    <source>
    </source>
</evidence>
<evidence type="ECO:0000269" key="15">
    <source>
    </source>
</evidence>
<evidence type="ECO:0000269" key="16">
    <source>
    </source>
</evidence>
<evidence type="ECO:0000269" key="17">
    <source>
    </source>
</evidence>
<evidence type="ECO:0000305" key="18"/>
<evidence type="ECO:0000305" key="19">
    <source>
    </source>
</evidence>
<evidence type="ECO:0000305" key="20">
    <source>
    </source>
</evidence>
<evidence type="ECO:0007744" key="21">
    <source>
    </source>
</evidence>
<evidence type="ECO:0007744" key="22">
    <source>
    </source>
</evidence>